<feature type="chain" id="PRO_0000101187" description="Signal recognition particle 54 kDa protein">
    <location>
        <begin position="1"/>
        <end position="447"/>
    </location>
</feature>
<feature type="binding site" evidence="1">
    <location>
        <begin position="103"/>
        <end position="110"/>
    </location>
    <ligand>
        <name>GTP</name>
        <dbReference type="ChEBI" id="CHEBI:37565"/>
    </ligand>
</feature>
<feature type="binding site" evidence="1">
    <location>
        <begin position="185"/>
        <end position="189"/>
    </location>
    <ligand>
        <name>GTP</name>
        <dbReference type="ChEBI" id="CHEBI:37565"/>
    </ligand>
</feature>
<feature type="binding site" evidence="1">
    <location>
        <begin position="245"/>
        <end position="248"/>
    </location>
    <ligand>
        <name>GTP</name>
        <dbReference type="ChEBI" id="CHEBI:37565"/>
    </ligand>
</feature>
<feature type="helix" evidence="4">
    <location>
        <begin position="5"/>
        <end position="13"/>
    </location>
</feature>
<feature type="helix" evidence="3">
    <location>
        <begin position="18"/>
        <end position="36"/>
    </location>
</feature>
<feature type="helix" evidence="3">
    <location>
        <begin position="41"/>
        <end position="57"/>
    </location>
</feature>
<feature type="helix" evidence="3">
    <location>
        <begin position="67"/>
        <end position="80"/>
    </location>
</feature>
<feature type="strand" evidence="2">
    <location>
        <begin position="84"/>
        <end position="86"/>
    </location>
</feature>
<feature type="strand" evidence="3">
    <location>
        <begin position="93"/>
        <end position="102"/>
    </location>
</feature>
<feature type="helix" evidence="3">
    <location>
        <begin position="109"/>
        <end position="122"/>
    </location>
</feature>
<feature type="strand" evidence="3">
    <location>
        <begin position="127"/>
        <end position="131"/>
    </location>
</feature>
<feature type="helix" evidence="3">
    <location>
        <begin position="139"/>
        <end position="150"/>
    </location>
</feature>
<feature type="strand" evidence="3">
    <location>
        <begin position="153"/>
        <end position="156"/>
    </location>
</feature>
<feature type="helix" evidence="3">
    <location>
        <begin position="163"/>
        <end position="176"/>
    </location>
</feature>
<feature type="strand" evidence="3">
    <location>
        <begin position="180"/>
        <end position="185"/>
    </location>
</feature>
<feature type="strand" evidence="2">
    <location>
        <begin position="190"/>
        <end position="192"/>
    </location>
</feature>
<feature type="helix" evidence="3">
    <location>
        <begin position="193"/>
        <end position="195"/>
    </location>
</feature>
<feature type="helix" evidence="3">
    <location>
        <begin position="196"/>
        <end position="209"/>
    </location>
</feature>
<feature type="strand" evidence="3">
    <location>
        <begin position="212"/>
        <end position="219"/>
    </location>
</feature>
<feature type="helix" evidence="3">
    <location>
        <begin position="226"/>
        <end position="236"/>
    </location>
</feature>
<feature type="strand" evidence="3">
    <location>
        <begin position="241"/>
        <end position="245"/>
    </location>
</feature>
<feature type="helix" evidence="2">
    <location>
        <begin position="247"/>
        <end position="249"/>
    </location>
</feature>
<feature type="helix" evidence="3">
    <location>
        <begin position="254"/>
        <end position="263"/>
    </location>
</feature>
<feature type="strand" evidence="3">
    <location>
        <begin position="266"/>
        <end position="271"/>
    </location>
</feature>
<feature type="strand" evidence="3">
    <location>
        <begin position="273"/>
        <end position="275"/>
    </location>
</feature>
<feature type="strand" evidence="3">
    <location>
        <begin position="279"/>
        <end position="281"/>
    </location>
</feature>
<feature type="helix" evidence="3">
    <location>
        <begin position="284"/>
        <end position="291"/>
    </location>
</feature>
<feature type="helix" evidence="2">
    <location>
        <begin position="296"/>
        <end position="306"/>
    </location>
</feature>
<feature type="helix" evidence="2">
    <location>
        <begin position="329"/>
        <end position="341"/>
    </location>
</feature>
<feature type="strand" evidence="2">
    <location>
        <begin position="344"/>
        <end position="346"/>
    </location>
</feature>
<feature type="helix" evidence="2">
    <location>
        <begin position="347"/>
        <end position="350"/>
    </location>
</feature>
<feature type="turn" evidence="2">
    <location>
        <begin position="351"/>
        <end position="353"/>
    </location>
</feature>
<feature type="helix" evidence="2">
    <location>
        <begin position="363"/>
        <end position="368"/>
    </location>
</feature>
<feature type="helix" evidence="2">
    <location>
        <begin position="377"/>
        <end position="382"/>
    </location>
</feature>
<feature type="turn" evidence="2">
    <location>
        <begin position="388"/>
        <end position="390"/>
    </location>
</feature>
<feature type="helix" evidence="2">
    <location>
        <begin position="392"/>
        <end position="394"/>
    </location>
</feature>
<feature type="helix" evidence="2">
    <location>
        <begin position="397"/>
        <end position="407"/>
    </location>
</feature>
<feature type="helix" evidence="2">
    <location>
        <begin position="411"/>
        <end position="429"/>
    </location>
</feature>
<reference key="1">
    <citation type="journal article" date="2001" name="Proc. Natl. Acad. Sci. U.S.A.">
        <title>The complete genome of the crenarchaeon Sulfolobus solfataricus P2.</title>
        <authorList>
            <person name="She Q."/>
            <person name="Singh R.K."/>
            <person name="Confalonieri F."/>
            <person name="Zivanovic Y."/>
            <person name="Allard G."/>
            <person name="Awayez M.J."/>
            <person name="Chan-Weiher C.C.-Y."/>
            <person name="Clausen I.G."/>
            <person name="Curtis B.A."/>
            <person name="De Moors A."/>
            <person name="Erauso G."/>
            <person name="Fletcher C."/>
            <person name="Gordon P.M.K."/>
            <person name="Heikamp-de Jong I."/>
            <person name="Jeffries A.C."/>
            <person name="Kozera C.J."/>
            <person name="Medina N."/>
            <person name="Peng X."/>
            <person name="Thi-Ngoc H.P."/>
            <person name="Redder P."/>
            <person name="Schenk M.E."/>
            <person name="Theriault C."/>
            <person name="Tolstrup N."/>
            <person name="Charlebois R.L."/>
            <person name="Doolittle W.F."/>
            <person name="Duguet M."/>
            <person name="Gaasterland T."/>
            <person name="Garrett R.A."/>
            <person name="Ragan M.A."/>
            <person name="Sensen C.W."/>
            <person name="Van der Oost J."/>
        </authorList>
    </citation>
    <scope>NUCLEOTIDE SEQUENCE [LARGE SCALE GENOMIC DNA]</scope>
    <source>
        <strain>ATCC 35092 / DSM 1617 / JCM 11322 / P2</strain>
    </source>
</reference>
<protein>
    <recommendedName>
        <fullName evidence="1">Signal recognition particle 54 kDa protein</fullName>
        <shortName evidence="1">SRP54</shortName>
        <ecNumber evidence="1">3.6.5.4</ecNumber>
    </recommendedName>
</protein>
<dbReference type="EC" id="3.6.5.4" evidence="1"/>
<dbReference type="EMBL" id="AE006641">
    <property type="protein sequence ID" value="AAK41245.1"/>
    <property type="molecule type" value="Genomic_DNA"/>
</dbReference>
<dbReference type="PIR" id="F90248">
    <property type="entry name" value="F90248"/>
</dbReference>
<dbReference type="RefSeq" id="WP_010923154.1">
    <property type="nucleotide sequence ID" value="NC_002754.1"/>
</dbReference>
<dbReference type="PDB" id="1QZW">
    <property type="method" value="X-ray"/>
    <property type="resolution" value="4.10 A"/>
    <property type="chains" value="A/C/E/G=1-432"/>
</dbReference>
<dbReference type="PDB" id="1QZX">
    <property type="method" value="X-ray"/>
    <property type="resolution" value="4.00 A"/>
    <property type="chains" value="A/B=1-432"/>
</dbReference>
<dbReference type="PDB" id="2IY3">
    <property type="method" value="EM"/>
    <property type="resolution" value="16.00 A"/>
    <property type="chains" value="A=297-432"/>
</dbReference>
<dbReference type="PDB" id="3KL4">
    <property type="method" value="X-ray"/>
    <property type="resolution" value="3.50 A"/>
    <property type="chains" value="A=2-432"/>
</dbReference>
<dbReference type="PDB" id="3ZN8">
    <property type="method" value="EM"/>
    <property type="resolution" value="12.00 A"/>
    <property type="chains" value="M=308-431"/>
</dbReference>
<dbReference type="PDB" id="5L3S">
    <property type="method" value="X-ray"/>
    <property type="resolution" value="1.90 A"/>
    <property type="chains" value="A/C/E/G=1-292"/>
</dbReference>
<dbReference type="PDB" id="5L3V">
    <property type="method" value="X-ray"/>
    <property type="resolution" value="2.30 A"/>
    <property type="chains" value="A/B=1-293"/>
</dbReference>
<dbReference type="PDBsum" id="1QZW"/>
<dbReference type="PDBsum" id="1QZX"/>
<dbReference type="PDBsum" id="2IY3"/>
<dbReference type="PDBsum" id="3KL4"/>
<dbReference type="PDBsum" id="3ZN8"/>
<dbReference type="PDBsum" id="5L3S"/>
<dbReference type="PDBsum" id="5L3V"/>
<dbReference type="EMDB" id="EMD-2316"/>
<dbReference type="SMR" id="Q97ZE7"/>
<dbReference type="FunCoup" id="Q97ZE7">
    <property type="interactions" value="279"/>
</dbReference>
<dbReference type="STRING" id="273057.SSO0971"/>
<dbReference type="PaxDb" id="273057-SSO0971"/>
<dbReference type="EnsemblBacteria" id="AAK41245">
    <property type="protein sequence ID" value="AAK41245"/>
    <property type="gene ID" value="SSO0971"/>
</dbReference>
<dbReference type="GeneID" id="1455212"/>
<dbReference type="KEGG" id="sso:SSO0971"/>
<dbReference type="PATRIC" id="fig|273057.12.peg.970"/>
<dbReference type="eggNOG" id="arCOG01228">
    <property type="taxonomic scope" value="Archaea"/>
</dbReference>
<dbReference type="HOGENOM" id="CLU_009301_6_0_2"/>
<dbReference type="InParanoid" id="Q97ZE7"/>
<dbReference type="PhylomeDB" id="Q97ZE7"/>
<dbReference type="EvolutionaryTrace" id="Q97ZE7"/>
<dbReference type="Proteomes" id="UP000001974">
    <property type="component" value="Chromosome"/>
</dbReference>
<dbReference type="GO" id="GO:0048500">
    <property type="term" value="C:signal recognition particle"/>
    <property type="evidence" value="ECO:0007669"/>
    <property type="project" value="UniProtKB-UniRule"/>
</dbReference>
<dbReference type="GO" id="GO:0008312">
    <property type="term" value="F:7S RNA binding"/>
    <property type="evidence" value="ECO:0007669"/>
    <property type="project" value="UniProtKB-UniRule"/>
</dbReference>
<dbReference type="GO" id="GO:0016887">
    <property type="term" value="F:ATP hydrolysis activity"/>
    <property type="evidence" value="ECO:0007669"/>
    <property type="project" value="InterPro"/>
</dbReference>
<dbReference type="GO" id="GO:0005525">
    <property type="term" value="F:GTP binding"/>
    <property type="evidence" value="ECO:0007669"/>
    <property type="project" value="UniProtKB-UniRule"/>
</dbReference>
<dbReference type="GO" id="GO:0003924">
    <property type="term" value="F:GTPase activity"/>
    <property type="evidence" value="ECO:0007669"/>
    <property type="project" value="UniProtKB-UniRule"/>
</dbReference>
<dbReference type="GO" id="GO:0006614">
    <property type="term" value="P:SRP-dependent cotranslational protein targeting to membrane"/>
    <property type="evidence" value="ECO:0007669"/>
    <property type="project" value="InterPro"/>
</dbReference>
<dbReference type="CDD" id="cd17875">
    <property type="entry name" value="SRP54_G"/>
    <property type="match status" value="1"/>
</dbReference>
<dbReference type="FunFam" id="3.40.50.300:FF:000022">
    <property type="entry name" value="Signal recognition particle 54 kDa subunit"/>
    <property type="match status" value="1"/>
</dbReference>
<dbReference type="Gene3D" id="3.40.50.300">
    <property type="entry name" value="P-loop containing nucleotide triphosphate hydrolases"/>
    <property type="match status" value="1"/>
</dbReference>
<dbReference type="Gene3D" id="1.20.120.140">
    <property type="entry name" value="Signal recognition particle SRP54, nucleotide-binding domain"/>
    <property type="match status" value="1"/>
</dbReference>
<dbReference type="Gene3D" id="1.10.260.30">
    <property type="entry name" value="Signal recognition particle, SRP54 subunit, M-domain"/>
    <property type="match status" value="1"/>
</dbReference>
<dbReference type="HAMAP" id="MF_00306">
    <property type="entry name" value="SRP54"/>
    <property type="match status" value="1"/>
</dbReference>
<dbReference type="InterPro" id="IPR003593">
    <property type="entry name" value="AAA+_ATPase"/>
</dbReference>
<dbReference type="InterPro" id="IPR027417">
    <property type="entry name" value="P-loop_NTPase"/>
</dbReference>
<dbReference type="InterPro" id="IPR036891">
    <property type="entry name" value="Signal_recog_part_SRP54_M_sf"/>
</dbReference>
<dbReference type="InterPro" id="IPR013822">
    <property type="entry name" value="Signal_recog_particl_SRP54_hlx"/>
</dbReference>
<dbReference type="InterPro" id="IPR004125">
    <property type="entry name" value="Signal_recog_particle_SRP54_M"/>
</dbReference>
<dbReference type="InterPro" id="IPR036225">
    <property type="entry name" value="SRP/SRP_N"/>
</dbReference>
<dbReference type="InterPro" id="IPR022941">
    <property type="entry name" value="SRP54"/>
</dbReference>
<dbReference type="InterPro" id="IPR000897">
    <property type="entry name" value="SRP54_GTPase_dom"/>
</dbReference>
<dbReference type="InterPro" id="IPR042101">
    <property type="entry name" value="SRP54_N_sf"/>
</dbReference>
<dbReference type="PANTHER" id="PTHR11564">
    <property type="entry name" value="SIGNAL RECOGNITION PARTICLE 54K PROTEIN SRP54"/>
    <property type="match status" value="1"/>
</dbReference>
<dbReference type="PANTHER" id="PTHR11564:SF5">
    <property type="entry name" value="SIGNAL RECOGNITION PARTICLE SUBUNIT SRP54"/>
    <property type="match status" value="1"/>
</dbReference>
<dbReference type="Pfam" id="PF00448">
    <property type="entry name" value="SRP54"/>
    <property type="match status" value="1"/>
</dbReference>
<dbReference type="Pfam" id="PF02881">
    <property type="entry name" value="SRP54_N"/>
    <property type="match status" value="1"/>
</dbReference>
<dbReference type="Pfam" id="PF02978">
    <property type="entry name" value="SRP_SPB"/>
    <property type="match status" value="1"/>
</dbReference>
<dbReference type="SMART" id="SM00382">
    <property type="entry name" value="AAA"/>
    <property type="match status" value="1"/>
</dbReference>
<dbReference type="SMART" id="SM00962">
    <property type="entry name" value="SRP54"/>
    <property type="match status" value="1"/>
</dbReference>
<dbReference type="SMART" id="SM00963">
    <property type="entry name" value="SRP54_N"/>
    <property type="match status" value="1"/>
</dbReference>
<dbReference type="SUPFAM" id="SSF47364">
    <property type="entry name" value="Domain of the SRP/SRP receptor G-proteins"/>
    <property type="match status" value="1"/>
</dbReference>
<dbReference type="SUPFAM" id="SSF52540">
    <property type="entry name" value="P-loop containing nucleoside triphosphate hydrolases"/>
    <property type="match status" value="1"/>
</dbReference>
<dbReference type="SUPFAM" id="SSF47446">
    <property type="entry name" value="Signal peptide-binding domain"/>
    <property type="match status" value="1"/>
</dbReference>
<proteinExistence type="evidence at protein level"/>
<gene>
    <name evidence="1" type="primary">srp54</name>
    <name type="ordered locus">SSO0971</name>
</gene>
<organism>
    <name type="scientific">Saccharolobus solfataricus (strain ATCC 35092 / DSM 1617 / JCM 11322 / P2)</name>
    <name type="common">Sulfolobus solfataricus</name>
    <dbReference type="NCBI Taxonomy" id="273057"/>
    <lineage>
        <taxon>Archaea</taxon>
        <taxon>Thermoproteota</taxon>
        <taxon>Thermoprotei</taxon>
        <taxon>Sulfolobales</taxon>
        <taxon>Sulfolobaceae</taxon>
        <taxon>Saccharolobus</taxon>
    </lineage>
</organism>
<accession>Q97ZE7</accession>
<evidence type="ECO:0000255" key="1">
    <source>
        <dbReference type="HAMAP-Rule" id="MF_00306"/>
    </source>
</evidence>
<evidence type="ECO:0007829" key="2">
    <source>
        <dbReference type="PDB" id="3KL4"/>
    </source>
</evidence>
<evidence type="ECO:0007829" key="3">
    <source>
        <dbReference type="PDB" id="5L3S"/>
    </source>
</evidence>
<evidence type="ECO:0007829" key="4">
    <source>
        <dbReference type="PDB" id="5L3V"/>
    </source>
</evidence>
<comment type="function">
    <text evidence="1">Involved in targeting and insertion of nascent membrane proteins into the cytoplasmic membrane. Binds to the hydrophobic signal sequence of the ribosome-nascent chain (RNC) as it emerges from the ribosomes. The SRP-RNC complex is then targeted to the cytoplasmic membrane where it interacts with the SRP receptor FtsY.</text>
</comment>
<comment type="catalytic activity">
    <reaction evidence="1">
        <text>GTP + H2O = GDP + phosphate + H(+)</text>
        <dbReference type="Rhea" id="RHEA:19669"/>
        <dbReference type="ChEBI" id="CHEBI:15377"/>
        <dbReference type="ChEBI" id="CHEBI:15378"/>
        <dbReference type="ChEBI" id="CHEBI:37565"/>
        <dbReference type="ChEBI" id="CHEBI:43474"/>
        <dbReference type="ChEBI" id="CHEBI:58189"/>
        <dbReference type="EC" id="3.6.5.4"/>
    </reaction>
</comment>
<comment type="subunit">
    <text evidence="1">Part of the signal recognition particle protein translocation system, which is composed of SRP and FtsY. Archaeal SRP consists of a 7S RNA molecule of 300 nucleotides and two protein subunits: SRP54 and SRP19.</text>
</comment>
<comment type="subcellular location">
    <subcellularLocation>
        <location evidence="1">Cytoplasm</location>
    </subcellularLocation>
    <text evidence="1">The SRP-RNC complex is targeted to the cytoplasmic membrane.</text>
</comment>
<comment type="domain">
    <text evidence="1">Composed of three domains: the N-terminal N domain, which is responsible for interactions with the ribosome, the central G domain, which binds GTP, and the C-terminal M domain, which binds the RNA and the signal sequence of the RNC.</text>
</comment>
<comment type="similarity">
    <text evidence="1">Belongs to the GTP-binding SRP family. SRP54 subfamily.</text>
</comment>
<keyword id="KW-0002">3D-structure</keyword>
<keyword id="KW-0963">Cytoplasm</keyword>
<keyword id="KW-0342">GTP-binding</keyword>
<keyword id="KW-0378">Hydrolase</keyword>
<keyword id="KW-0547">Nucleotide-binding</keyword>
<keyword id="KW-1185">Reference proteome</keyword>
<keyword id="KW-0687">Ribonucleoprotein</keyword>
<keyword id="KW-0694">RNA-binding</keyword>
<keyword id="KW-0733">Signal recognition particle</keyword>
<sequence length="447" mass="50047">MLENIRDAVRKFLTGSTPYEKAVDEFIKDLQKSLISSDVNVKLVFSLTAKIKERLNKEKPPSVLERKEWFISIVYDELSKLFGGDKEPNVNPTKLPFIIMLVGVQGSGKTTTAGKLAYFYKKRGYKVGLVAADVYRPAAYDQLLQLGNQIGVQVYGEPNNQNPIEIAKKGVDIFVKNKMDIIIVDTAGRHGYGEETKLLEEMKEMYDVLKPDDVILVIDASIGQKAYDLASRFHQASPIGSVIITKMDGTAKGGGALSAVVATGATIKFIGTGEKIDELETFNAKRFVSRILGMGDIESILEKVKGLEEYDKIQKKMEDVMEGKGKLTLRDVYAQIIALRKMGPLSKVLQHIPGLGIMLPTPSEDQLKIGEEKIRRWLAALNSMTYKELENPNIIDKSRMRRIAEGSGLEVEEVRELLEWYNNMNRLLKMVKRRRGNIDKLFGGKIG</sequence>
<name>SRP54_SACS2</name>